<name>RNZ_BACC1</name>
<keyword id="KW-0255">Endonuclease</keyword>
<keyword id="KW-0378">Hydrolase</keyword>
<keyword id="KW-0479">Metal-binding</keyword>
<keyword id="KW-0540">Nuclease</keyword>
<keyword id="KW-0819">tRNA processing</keyword>
<keyword id="KW-0862">Zinc</keyword>
<organism>
    <name type="scientific">Bacillus cereus (strain ATCC 10987 / NRS 248)</name>
    <dbReference type="NCBI Taxonomy" id="222523"/>
    <lineage>
        <taxon>Bacteria</taxon>
        <taxon>Bacillati</taxon>
        <taxon>Bacillota</taxon>
        <taxon>Bacilli</taxon>
        <taxon>Bacillales</taxon>
        <taxon>Bacillaceae</taxon>
        <taxon>Bacillus</taxon>
        <taxon>Bacillus cereus group</taxon>
    </lineage>
</organism>
<proteinExistence type="inferred from homology"/>
<comment type="function">
    <text evidence="1">Zinc phosphodiesterase, which displays some tRNA 3'-processing endonuclease activity. Probably involved in tRNA maturation, by removing a 3'-trailer from precursor tRNA.</text>
</comment>
<comment type="catalytic activity">
    <reaction evidence="1">
        <text>Endonucleolytic cleavage of RNA, removing extra 3' nucleotides from tRNA precursor, generating 3' termini of tRNAs. A 3'-hydroxy group is left at the tRNA terminus and a 5'-phosphoryl group is left at the trailer molecule.</text>
        <dbReference type="EC" id="3.1.26.11"/>
    </reaction>
</comment>
<comment type="cofactor">
    <cofactor evidence="1">
        <name>Zn(2+)</name>
        <dbReference type="ChEBI" id="CHEBI:29105"/>
    </cofactor>
    <text evidence="1">Binds 2 Zn(2+) ions.</text>
</comment>
<comment type="subunit">
    <text evidence="1">Homodimer.</text>
</comment>
<comment type="similarity">
    <text evidence="1">Belongs to the RNase Z family.</text>
</comment>
<protein>
    <recommendedName>
        <fullName evidence="1">Ribonuclease Z</fullName>
        <shortName evidence="1">RNase Z</shortName>
        <ecNumber evidence="1">3.1.26.11</ecNumber>
    </recommendedName>
    <alternativeName>
        <fullName evidence="1">tRNA 3 endonuclease</fullName>
    </alternativeName>
    <alternativeName>
        <fullName evidence="1">tRNase Z</fullName>
    </alternativeName>
</protein>
<dbReference type="EC" id="3.1.26.11" evidence="1"/>
<dbReference type="EMBL" id="AE017194">
    <property type="protein sequence ID" value="AAS43111.1"/>
    <property type="molecule type" value="Genomic_DNA"/>
</dbReference>
<dbReference type="SMR" id="Q731F6"/>
<dbReference type="KEGG" id="bca:BCE_4210"/>
<dbReference type="HOGENOM" id="CLU_031317_2_0_9"/>
<dbReference type="Proteomes" id="UP000002527">
    <property type="component" value="Chromosome"/>
</dbReference>
<dbReference type="GO" id="GO:0042781">
    <property type="term" value="F:3'-tRNA processing endoribonuclease activity"/>
    <property type="evidence" value="ECO:0007669"/>
    <property type="project" value="UniProtKB-UniRule"/>
</dbReference>
<dbReference type="GO" id="GO:0008270">
    <property type="term" value="F:zinc ion binding"/>
    <property type="evidence" value="ECO:0007669"/>
    <property type="project" value="UniProtKB-UniRule"/>
</dbReference>
<dbReference type="CDD" id="cd07717">
    <property type="entry name" value="RNaseZ_ZiPD-like_MBL-fold"/>
    <property type="match status" value="1"/>
</dbReference>
<dbReference type="FunFam" id="3.60.15.10:FF:000002">
    <property type="entry name" value="Ribonuclease Z"/>
    <property type="match status" value="1"/>
</dbReference>
<dbReference type="Gene3D" id="3.60.15.10">
    <property type="entry name" value="Ribonuclease Z/Hydroxyacylglutathione hydrolase-like"/>
    <property type="match status" value="1"/>
</dbReference>
<dbReference type="HAMAP" id="MF_01818">
    <property type="entry name" value="RNase_Z_BN"/>
    <property type="match status" value="1"/>
</dbReference>
<dbReference type="InterPro" id="IPR001279">
    <property type="entry name" value="Metallo-B-lactamas"/>
</dbReference>
<dbReference type="InterPro" id="IPR036866">
    <property type="entry name" value="RibonucZ/Hydroxyglut_hydro"/>
</dbReference>
<dbReference type="InterPro" id="IPR013471">
    <property type="entry name" value="RNase_Z/BN"/>
</dbReference>
<dbReference type="NCBIfam" id="NF000800">
    <property type="entry name" value="PRK00055.1-1"/>
    <property type="match status" value="1"/>
</dbReference>
<dbReference type="NCBIfam" id="NF000801">
    <property type="entry name" value="PRK00055.1-3"/>
    <property type="match status" value="1"/>
</dbReference>
<dbReference type="NCBIfam" id="TIGR02651">
    <property type="entry name" value="RNase_Z"/>
    <property type="match status" value="1"/>
</dbReference>
<dbReference type="PANTHER" id="PTHR46018">
    <property type="entry name" value="ZINC PHOSPHODIESTERASE ELAC PROTEIN 1"/>
    <property type="match status" value="1"/>
</dbReference>
<dbReference type="PANTHER" id="PTHR46018:SF2">
    <property type="entry name" value="ZINC PHOSPHODIESTERASE ELAC PROTEIN 1"/>
    <property type="match status" value="1"/>
</dbReference>
<dbReference type="Pfam" id="PF00753">
    <property type="entry name" value="Lactamase_B"/>
    <property type="match status" value="1"/>
</dbReference>
<dbReference type="Pfam" id="PF12706">
    <property type="entry name" value="Lactamase_B_2"/>
    <property type="match status" value="1"/>
</dbReference>
<dbReference type="SMART" id="SM00849">
    <property type="entry name" value="Lactamase_B"/>
    <property type="match status" value="1"/>
</dbReference>
<dbReference type="SUPFAM" id="SSF56281">
    <property type="entry name" value="Metallo-hydrolase/oxidoreductase"/>
    <property type="match status" value="1"/>
</dbReference>
<reference key="1">
    <citation type="journal article" date="2004" name="Nucleic Acids Res.">
        <title>The genome sequence of Bacillus cereus ATCC 10987 reveals metabolic adaptations and a large plasmid related to Bacillus anthracis pXO1.</title>
        <authorList>
            <person name="Rasko D.A."/>
            <person name="Ravel J."/>
            <person name="Oekstad O.A."/>
            <person name="Helgason E."/>
            <person name="Cer R.Z."/>
            <person name="Jiang L."/>
            <person name="Shores K.A."/>
            <person name="Fouts D.E."/>
            <person name="Tourasse N.J."/>
            <person name="Angiuoli S.V."/>
            <person name="Kolonay J.F."/>
            <person name="Nelson W.C."/>
            <person name="Kolstoe A.-B."/>
            <person name="Fraser C.M."/>
            <person name="Read T.D."/>
        </authorList>
    </citation>
    <scope>NUCLEOTIDE SEQUENCE [LARGE SCALE GENOMIC DNA]</scope>
    <source>
        <strain>ATCC 10987 / NRS 248</strain>
    </source>
</reference>
<gene>
    <name evidence="1" type="primary">rnz</name>
    <name type="ordered locus">BCE_4210</name>
</gene>
<feature type="chain" id="PRO_0000155840" description="Ribonuclease Z">
    <location>
        <begin position="1"/>
        <end position="307"/>
    </location>
</feature>
<feature type="active site" description="Proton acceptor" evidence="1">
    <location>
        <position position="67"/>
    </location>
</feature>
<feature type="binding site" evidence="1">
    <location>
        <position position="63"/>
    </location>
    <ligand>
        <name>Zn(2+)</name>
        <dbReference type="ChEBI" id="CHEBI:29105"/>
        <label>1</label>
        <note>catalytic</note>
    </ligand>
</feature>
<feature type="binding site" evidence="1">
    <location>
        <position position="65"/>
    </location>
    <ligand>
        <name>Zn(2+)</name>
        <dbReference type="ChEBI" id="CHEBI:29105"/>
        <label>1</label>
        <note>catalytic</note>
    </ligand>
</feature>
<feature type="binding site" evidence="1">
    <location>
        <position position="67"/>
    </location>
    <ligand>
        <name>Zn(2+)</name>
        <dbReference type="ChEBI" id="CHEBI:29105"/>
        <label>2</label>
        <note>catalytic</note>
    </ligand>
</feature>
<feature type="binding site" evidence="1">
    <location>
        <position position="68"/>
    </location>
    <ligand>
        <name>Zn(2+)</name>
        <dbReference type="ChEBI" id="CHEBI:29105"/>
        <label>2</label>
        <note>catalytic</note>
    </ligand>
</feature>
<feature type="binding site" evidence="1">
    <location>
        <position position="141"/>
    </location>
    <ligand>
        <name>Zn(2+)</name>
        <dbReference type="ChEBI" id="CHEBI:29105"/>
        <label>1</label>
        <note>catalytic</note>
    </ligand>
</feature>
<feature type="binding site" evidence="1">
    <location>
        <position position="212"/>
    </location>
    <ligand>
        <name>Zn(2+)</name>
        <dbReference type="ChEBI" id="CHEBI:29105"/>
        <label>1</label>
        <note>catalytic</note>
    </ligand>
</feature>
<feature type="binding site" evidence="1">
    <location>
        <position position="212"/>
    </location>
    <ligand>
        <name>Zn(2+)</name>
        <dbReference type="ChEBI" id="CHEBI:29105"/>
        <label>2</label>
        <note>catalytic</note>
    </ligand>
</feature>
<feature type="binding site" evidence="1">
    <location>
        <position position="270"/>
    </location>
    <ligand>
        <name>Zn(2+)</name>
        <dbReference type="ChEBI" id="CHEBI:29105"/>
        <label>2</label>
        <note>catalytic</note>
    </ligand>
</feature>
<sequence length="307" mass="34225">MEFVFLGTGAGVPSKGRNVSAIALQLLEERGQTWLFDCGEATQHQILHTSVRPRRIEKIFITHLHGDHIFGLPGLLGSRSFQGGTTPLTVYGPKGIKQFIEVALSVSTTHVKYPLEIVEITEEGTVFEDNEFHVETKRLSHGIECFGYRIIEKDIQGALLVDKLLEMGVKPGPLFKRLKDGEVVELENGTILNGQDFIGPPQKGRIITILGDTRFCEASRELAQDADVLVHEATFAAEDEQQAYDYFHSTSKQAASIALQANAKRLILTHISSRYQGDTYKELLKEARELFSNTEIATDLKSFPVER</sequence>
<accession>Q731F6</accession>
<evidence type="ECO:0000255" key="1">
    <source>
        <dbReference type="HAMAP-Rule" id="MF_01818"/>
    </source>
</evidence>